<reference key="1">
    <citation type="submission" date="2006-09" db="EMBL/GenBank/DDBJ databases">
        <title>Complete sequence of chromosome 1 of Shewanella sp. ANA-3.</title>
        <authorList>
            <person name="Copeland A."/>
            <person name="Lucas S."/>
            <person name="Lapidus A."/>
            <person name="Barry K."/>
            <person name="Detter J.C."/>
            <person name="Glavina del Rio T."/>
            <person name="Hammon N."/>
            <person name="Israni S."/>
            <person name="Dalin E."/>
            <person name="Tice H."/>
            <person name="Pitluck S."/>
            <person name="Chertkov O."/>
            <person name="Brettin T."/>
            <person name="Bruce D."/>
            <person name="Han C."/>
            <person name="Tapia R."/>
            <person name="Gilna P."/>
            <person name="Schmutz J."/>
            <person name="Larimer F."/>
            <person name="Land M."/>
            <person name="Hauser L."/>
            <person name="Kyrpides N."/>
            <person name="Kim E."/>
            <person name="Newman D."/>
            <person name="Salticov C."/>
            <person name="Konstantinidis K."/>
            <person name="Klappenback J."/>
            <person name="Tiedje J."/>
            <person name="Richardson P."/>
        </authorList>
    </citation>
    <scope>NUCLEOTIDE SEQUENCE [LARGE SCALE GENOMIC DNA]</scope>
    <source>
        <strain>ANA-3</strain>
    </source>
</reference>
<feature type="chain" id="PRO_1000021060" description="Inner membrane-spanning protein YciB">
    <location>
        <begin position="1"/>
        <end position="181"/>
    </location>
</feature>
<feature type="transmembrane region" description="Helical" evidence="1">
    <location>
        <begin position="10"/>
        <end position="30"/>
    </location>
</feature>
<feature type="transmembrane region" description="Helical" evidence="1">
    <location>
        <begin position="50"/>
        <end position="70"/>
    </location>
</feature>
<feature type="transmembrane region" description="Helical" evidence="1">
    <location>
        <begin position="72"/>
        <end position="92"/>
    </location>
</feature>
<feature type="transmembrane region" description="Helical" evidence="1">
    <location>
        <begin position="118"/>
        <end position="138"/>
    </location>
</feature>
<feature type="transmembrane region" description="Helical" evidence="1">
    <location>
        <begin position="148"/>
        <end position="168"/>
    </location>
</feature>
<gene>
    <name evidence="1" type="primary">yciB</name>
    <name type="ordered locus">Shewana3_1505</name>
</gene>
<keyword id="KW-0997">Cell inner membrane</keyword>
<keyword id="KW-1003">Cell membrane</keyword>
<keyword id="KW-0472">Membrane</keyword>
<keyword id="KW-0812">Transmembrane</keyword>
<keyword id="KW-1133">Transmembrane helix</keyword>
<dbReference type="EMBL" id="CP000469">
    <property type="protein sequence ID" value="ABK47739.1"/>
    <property type="molecule type" value="Genomic_DNA"/>
</dbReference>
<dbReference type="RefSeq" id="WP_011716559.1">
    <property type="nucleotide sequence ID" value="NC_008577.1"/>
</dbReference>
<dbReference type="STRING" id="94122.Shewana3_1505"/>
<dbReference type="KEGG" id="shn:Shewana3_1505"/>
<dbReference type="eggNOG" id="COG2917">
    <property type="taxonomic scope" value="Bacteria"/>
</dbReference>
<dbReference type="HOGENOM" id="CLU_089554_2_0_6"/>
<dbReference type="OrthoDB" id="9788219at2"/>
<dbReference type="Proteomes" id="UP000002589">
    <property type="component" value="Chromosome"/>
</dbReference>
<dbReference type="GO" id="GO:0005886">
    <property type="term" value="C:plasma membrane"/>
    <property type="evidence" value="ECO:0007669"/>
    <property type="project" value="UniProtKB-SubCell"/>
</dbReference>
<dbReference type="HAMAP" id="MF_00189">
    <property type="entry name" value="YciB"/>
    <property type="match status" value="1"/>
</dbReference>
<dbReference type="InterPro" id="IPR006008">
    <property type="entry name" value="YciB"/>
</dbReference>
<dbReference type="NCBIfam" id="TIGR00997">
    <property type="entry name" value="ispZ"/>
    <property type="match status" value="1"/>
</dbReference>
<dbReference type="NCBIfam" id="NF001324">
    <property type="entry name" value="PRK00259.1-2"/>
    <property type="match status" value="1"/>
</dbReference>
<dbReference type="NCBIfam" id="NF001325">
    <property type="entry name" value="PRK00259.1-3"/>
    <property type="match status" value="1"/>
</dbReference>
<dbReference type="PANTHER" id="PTHR36917:SF1">
    <property type="entry name" value="INNER MEMBRANE-SPANNING PROTEIN YCIB"/>
    <property type="match status" value="1"/>
</dbReference>
<dbReference type="PANTHER" id="PTHR36917">
    <property type="entry name" value="INTRACELLULAR SEPTATION PROTEIN A-RELATED"/>
    <property type="match status" value="1"/>
</dbReference>
<dbReference type="Pfam" id="PF04279">
    <property type="entry name" value="IspA"/>
    <property type="match status" value="1"/>
</dbReference>
<protein>
    <recommendedName>
        <fullName evidence="1">Inner membrane-spanning protein YciB</fullName>
    </recommendedName>
</protein>
<proteinExistence type="inferred from homology"/>
<comment type="function">
    <text evidence="1">Plays a role in cell envelope biogenesis, maintenance of cell envelope integrity and membrane homeostasis.</text>
</comment>
<comment type="subcellular location">
    <subcellularLocation>
        <location evidence="1">Cell inner membrane</location>
        <topology evidence="1">Multi-pass membrane protein</topology>
    </subcellularLocation>
</comment>
<comment type="similarity">
    <text evidence="1">Belongs to the YciB family.</text>
</comment>
<sequence length="181" mass="20891">MKQLLDFLPLIIFFAVYKFFDIYIASGALIAATALQLVVTYALYKKLEKMHLITFAMVTVFGTLTLVFHDDAFIKWKVTIIYALFALALGVSQLLNKSILKSMLGKEMKVADKIWAHVTWYWVSFFAICGLVNIYVAFRLPLETWVNFKVFGLTALTLINTVITVFYLYKHLPEDQRKELK</sequence>
<accession>A0KVC0</accession>
<organism>
    <name type="scientific">Shewanella sp. (strain ANA-3)</name>
    <dbReference type="NCBI Taxonomy" id="94122"/>
    <lineage>
        <taxon>Bacteria</taxon>
        <taxon>Pseudomonadati</taxon>
        <taxon>Pseudomonadota</taxon>
        <taxon>Gammaproteobacteria</taxon>
        <taxon>Alteromonadales</taxon>
        <taxon>Shewanellaceae</taxon>
        <taxon>Shewanella</taxon>
    </lineage>
</organism>
<name>YCIB_SHESA</name>
<evidence type="ECO:0000255" key="1">
    <source>
        <dbReference type="HAMAP-Rule" id="MF_00189"/>
    </source>
</evidence>